<feature type="chain" id="PRO_1000056362" description="Beta-ketoacyl-[acyl-carrier-protein] synthase III">
    <location>
        <begin position="1"/>
        <end position="310"/>
    </location>
</feature>
<feature type="region of interest" description="ACP-binding" evidence="1">
    <location>
        <begin position="236"/>
        <end position="240"/>
    </location>
</feature>
<feature type="active site" evidence="1">
    <location>
        <position position="112"/>
    </location>
</feature>
<feature type="active site" evidence="1">
    <location>
        <position position="235"/>
    </location>
</feature>
<feature type="active site" evidence="1">
    <location>
        <position position="265"/>
    </location>
</feature>
<proteinExistence type="inferred from homology"/>
<dbReference type="EC" id="2.3.1.180" evidence="1"/>
<dbReference type="EMBL" id="BA000043">
    <property type="protein sequence ID" value="BAD75089.1"/>
    <property type="molecule type" value="Genomic_DNA"/>
</dbReference>
<dbReference type="RefSeq" id="WP_011230305.1">
    <property type="nucleotide sequence ID" value="NC_006510.1"/>
</dbReference>
<dbReference type="SMR" id="Q5L1U1"/>
<dbReference type="STRING" id="235909.GK0804"/>
<dbReference type="KEGG" id="gka:GK0804"/>
<dbReference type="eggNOG" id="COG0332">
    <property type="taxonomic scope" value="Bacteria"/>
</dbReference>
<dbReference type="HOGENOM" id="CLU_039592_3_1_9"/>
<dbReference type="UniPathway" id="UPA00094"/>
<dbReference type="Proteomes" id="UP000001172">
    <property type="component" value="Chromosome"/>
</dbReference>
<dbReference type="GO" id="GO:0005737">
    <property type="term" value="C:cytoplasm"/>
    <property type="evidence" value="ECO:0007669"/>
    <property type="project" value="UniProtKB-SubCell"/>
</dbReference>
<dbReference type="GO" id="GO:0004315">
    <property type="term" value="F:3-oxoacyl-[acyl-carrier-protein] synthase activity"/>
    <property type="evidence" value="ECO:0007669"/>
    <property type="project" value="InterPro"/>
</dbReference>
<dbReference type="GO" id="GO:0033818">
    <property type="term" value="F:beta-ketoacyl-acyl-carrier-protein synthase III activity"/>
    <property type="evidence" value="ECO:0007669"/>
    <property type="project" value="UniProtKB-UniRule"/>
</dbReference>
<dbReference type="GO" id="GO:0006633">
    <property type="term" value="P:fatty acid biosynthetic process"/>
    <property type="evidence" value="ECO:0007669"/>
    <property type="project" value="UniProtKB-UniRule"/>
</dbReference>
<dbReference type="CDD" id="cd00830">
    <property type="entry name" value="KAS_III"/>
    <property type="match status" value="1"/>
</dbReference>
<dbReference type="FunFam" id="3.40.47.10:FF:000004">
    <property type="entry name" value="3-oxoacyl-[acyl-carrier-protein] synthase 3"/>
    <property type="match status" value="1"/>
</dbReference>
<dbReference type="Gene3D" id="3.40.47.10">
    <property type="match status" value="1"/>
</dbReference>
<dbReference type="HAMAP" id="MF_01815">
    <property type="entry name" value="FabH"/>
    <property type="match status" value="1"/>
</dbReference>
<dbReference type="InterPro" id="IPR013747">
    <property type="entry name" value="ACP_syn_III_C"/>
</dbReference>
<dbReference type="InterPro" id="IPR013751">
    <property type="entry name" value="ACP_syn_III_N"/>
</dbReference>
<dbReference type="InterPro" id="IPR004655">
    <property type="entry name" value="FabH"/>
</dbReference>
<dbReference type="InterPro" id="IPR016039">
    <property type="entry name" value="Thiolase-like"/>
</dbReference>
<dbReference type="NCBIfam" id="TIGR00747">
    <property type="entry name" value="fabH"/>
    <property type="match status" value="1"/>
</dbReference>
<dbReference type="NCBIfam" id="NF006829">
    <property type="entry name" value="PRK09352.1"/>
    <property type="match status" value="1"/>
</dbReference>
<dbReference type="PANTHER" id="PTHR43091">
    <property type="entry name" value="3-OXOACYL-[ACYL-CARRIER-PROTEIN] SYNTHASE"/>
    <property type="match status" value="1"/>
</dbReference>
<dbReference type="PANTHER" id="PTHR43091:SF1">
    <property type="entry name" value="BETA-KETOACYL-[ACYL-CARRIER-PROTEIN] SYNTHASE III, CHLOROPLASTIC"/>
    <property type="match status" value="1"/>
</dbReference>
<dbReference type="Pfam" id="PF08545">
    <property type="entry name" value="ACP_syn_III"/>
    <property type="match status" value="1"/>
</dbReference>
<dbReference type="Pfam" id="PF08541">
    <property type="entry name" value="ACP_syn_III_C"/>
    <property type="match status" value="1"/>
</dbReference>
<dbReference type="SUPFAM" id="SSF53901">
    <property type="entry name" value="Thiolase-like"/>
    <property type="match status" value="1"/>
</dbReference>
<reference key="1">
    <citation type="journal article" date="2004" name="Nucleic Acids Res.">
        <title>Thermoadaptation trait revealed by the genome sequence of thermophilic Geobacillus kaustophilus.</title>
        <authorList>
            <person name="Takami H."/>
            <person name="Takaki Y."/>
            <person name="Chee G.-J."/>
            <person name="Nishi S."/>
            <person name="Shimamura S."/>
            <person name="Suzuki H."/>
            <person name="Matsui S."/>
            <person name="Uchiyama I."/>
        </authorList>
    </citation>
    <scope>NUCLEOTIDE SEQUENCE [LARGE SCALE GENOMIC DNA]</scope>
    <source>
        <strain>HTA426</strain>
    </source>
</reference>
<accession>Q5L1U1</accession>
<protein>
    <recommendedName>
        <fullName evidence="1">Beta-ketoacyl-[acyl-carrier-protein] synthase III</fullName>
        <shortName evidence="1">Beta-ketoacyl-ACP synthase III</shortName>
        <shortName evidence="1">KAS III</shortName>
        <ecNumber evidence="1">2.3.1.180</ecNumber>
    </recommendedName>
    <alternativeName>
        <fullName evidence="1">3-oxoacyl-[acyl-carrier-protein] synthase 3</fullName>
    </alternativeName>
    <alternativeName>
        <fullName evidence="1">3-oxoacyl-[acyl-carrier-protein] synthase III</fullName>
    </alternativeName>
</protein>
<gene>
    <name evidence="1" type="primary">fabH</name>
    <name type="ordered locus">GK0804</name>
</gene>
<keyword id="KW-0012">Acyltransferase</keyword>
<keyword id="KW-0963">Cytoplasm</keyword>
<keyword id="KW-0275">Fatty acid biosynthesis</keyword>
<keyword id="KW-0276">Fatty acid metabolism</keyword>
<keyword id="KW-0444">Lipid biosynthesis</keyword>
<keyword id="KW-0443">Lipid metabolism</keyword>
<keyword id="KW-0511">Multifunctional enzyme</keyword>
<keyword id="KW-1185">Reference proteome</keyword>
<keyword id="KW-0808">Transferase</keyword>
<comment type="function">
    <text evidence="1">Catalyzes the condensation reaction of fatty acid synthesis by the addition to an acyl acceptor of two carbons from malonyl-ACP. Catalyzes the first condensation reaction which initiates fatty acid synthesis and may therefore play a role in governing the total rate of fatty acid production. Possesses both acetoacetyl-ACP synthase and acetyl transacylase activities. Its substrate specificity determines the biosynthesis of branched-chain and/or straight-chain of fatty acids.</text>
</comment>
<comment type="catalytic activity">
    <reaction evidence="1">
        <text>malonyl-[ACP] + acetyl-CoA + H(+) = 3-oxobutanoyl-[ACP] + CO2 + CoA</text>
        <dbReference type="Rhea" id="RHEA:12080"/>
        <dbReference type="Rhea" id="RHEA-COMP:9623"/>
        <dbReference type="Rhea" id="RHEA-COMP:9625"/>
        <dbReference type="ChEBI" id="CHEBI:15378"/>
        <dbReference type="ChEBI" id="CHEBI:16526"/>
        <dbReference type="ChEBI" id="CHEBI:57287"/>
        <dbReference type="ChEBI" id="CHEBI:57288"/>
        <dbReference type="ChEBI" id="CHEBI:78449"/>
        <dbReference type="ChEBI" id="CHEBI:78450"/>
        <dbReference type="EC" id="2.3.1.180"/>
    </reaction>
</comment>
<comment type="pathway">
    <text evidence="1">Lipid metabolism; fatty acid biosynthesis.</text>
</comment>
<comment type="subunit">
    <text evidence="1">Homodimer.</text>
</comment>
<comment type="subcellular location">
    <subcellularLocation>
        <location evidence="1">Cytoplasm</location>
    </subcellularLocation>
</comment>
<comment type="domain">
    <text evidence="1">The last Arg residue of the ACP-binding site is essential for the weak association between ACP/AcpP and FabH.</text>
</comment>
<comment type="similarity">
    <text evidence="1">Belongs to the thiolase-like superfamily. FabH family.</text>
</comment>
<evidence type="ECO:0000255" key="1">
    <source>
        <dbReference type="HAMAP-Rule" id="MF_01815"/>
    </source>
</evidence>
<organism>
    <name type="scientific">Geobacillus kaustophilus (strain HTA426)</name>
    <dbReference type="NCBI Taxonomy" id="235909"/>
    <lineage>
        <taxon>Bacteria</taxon>
        <taxon>Bacillati</taxon>
        <taxon>Bacillota</taxon>
        <taxon>Bacilli</taxon>
        <taxon>Bacillales</taxon>
        <taxon>Anoxybacillaceae</taxon>
        <taxon>Geobacillus</taxon>
        <taxon>Geobacillus thermoleovorans group</taxon>
    </lineage>
</organism>
<name>FABH_GEOKA</name>
<sequence>MGAGIIGVGRYVPEKVLTNFDLEKMMDTSDEWIRTRTGIEERRIAADDIDTSDMAYFAAKRALQDAGMEAKDIDLILVATVTPDRPFPSVACMLQERLGAVNAAALDISAACAGFMYGMVTAAQFIDTGAYKYILVVGADKLSKITDWTDRNTAVLFGDGAGAVVMGPVSPGRGILSFELGADGTGGKHLYKDEYIVMNGREVFKFAVRQMGESSVRVLEKAGLTKDDVDFLIPHQANIRIVEAARQRLELPEEKISTTIRRYGNTSAASIPISLVEELEAGKIHDDDLIIMVGFGGGLTWGAIALRWGR</sequence>